<organism>
    <name type="scientific">Tolumonas auensis (strain DSM 9187 / NBRC 110442 / TA 4)</name>
    <dbReference type="NCBI Taxonomy" id="595494"/>
    <lineage>
        <taxon>Bacteria</taxon>
        <taxon>Pseudomonadati</taxon>
        <taxon>Pseudomonadota</taxon>
        <taxon>Gammaproteobacteria</taxon>
        <taxon>Aeromonadales</taxon>
        <taxon>Aeromonadaceae</taxon>
        <taxon>Tolumonas</taxon>
    </lineage>
</organism>
<reference key="1">
    <citation type="submission" date="2009-05" db="EMBL/GenBank/DDBJ databases">
        <title>Complete sequence of Tolumonas auensis DSM 9187.</title>
        <authorList>
            <consortium name="US DOE Joint Genome Institute"/>
            <person name="Lucas S."/>
            <person name="Copeland A."/>
            <person name="Lapidus A."/>
            <person name="Glavina del Rio T."/>
            <person name="Tice H."/>
            <person name="Bruce D."/>
            <person name="Goodwin L."/>
            <person name="Pitluck S."/>
            <person name="Chertkov O."/>
            <person name="Brettin T."/>
            <person name="Detter J.C."/>
            <person name="Han C."/>
            <person name="Larimer F."/>
            <person name="Land M."/>
            <person name="Hauser L."/>
            <person name="Kyrpides N."/>
            <person name="Mikhailova N."/>
            <person name="Spring S."/>
            <person name="Beller H."/>
        </authorList>
    </citation>
    <scope>NUCLEOTIDE SEQUENCE [LARGE SCALE GENOMIC DNA]</scope>
    <source>
        <strain>DSM 9187 / NBRC 110442 / TA 4</strain>
    </source>
</reference>
<feature type="chain" id="PRO_1000212534" description="Chaperone protein HscA homolog">
    <location>
        <begin position="1"/>
        <end position="616"/>
    </location>
</feature>
<proteinExistence type="inferred from homology"/>
<keyword id="KW-0067">ATP-binding</keyword>
<keyword id="KW-0143">Chaperone</keyword>
<keyword id="KW-0547">Nucleotide-binding</keyword>
<keyword id="KW-1185">Reference proteome</keyword>
<protein>
    <recommendedName>
        <fullName evidence="1">Chaperone protein HscA homolog</fullName>
    </recommendedName>
</protein>
<evidence type="ECO:0000255" key="1">
    <source>
        <dbReference type="HAMAP-Rule" id="MF_00679"/>
    </source>
</evidence>
<comment type="function">
    <text evidence="1">Chaperone involved in the maturation of iron-sulfur cluster-containing proteins. Has a low intrinsic ATPase activity which is markedly stimulated by HscB.</text>
</comment>
<comment type="similarity">
    <text evidence="1">Belongs to the heat shock protein 70 family.</text>
</comment>
<dbReference type="EMBL" id="CP001616">
    <property type="protein sequence ID" value="ACQ93614.1"/>
    <property type="molecule type" value="Genomic_DNA"/>
</dbReference>
<dbReference type="RefSeq" id="WP_015879082.1">
    <property type="nucleotide sequence ID" value="NC_012691.1"/>
</dbReference>
<dbReference type="SMR" id="C4L7J8"/>
<dbReference type="STRING" id="595494.Tola_2015"/>
<dbReference type="KEGG" id="tau:Tola_2015"/>
<dbReference type="eggNOG" id="COG0443">
    <property type="taxonomic scope" value="Bacteria"/>
</dbReference>
<dbReference type="HOGENOM" id="CLU_005965_2_3_6"/>
<dbReference type="OrthoDB" id="9766019at2"/>
<dbReference type="Proteomes" id="UP000009073">
    <property type="component" value="Chromosome"/>
</dbReference>
<dbReference type="GO" id="GO:0005524">
    <property type="term" value="F:ATP binding"/>
    <property type="evidence" value="ECO:0007669"/>
    <property type="project" value="UniProtKB-KW"/>
</dbReference>
<dbReference type="GO" id="GO:0016887">
    <property type="term" value="F:ATP hydrolysis activity"/>
    <property type="evidence" value="ECO:0007669"/>
    <property type="project" value="UniProtKB-UniRule"/>
</dbReference>
<dbReference type="GO" id="GO:0140662">
    <property type="term" value="F:ATP-dependent protein folding chaperone"/>
    <property type="evidence" value="ECO:0007669"/>
    <property type="project" value="InterPro"/>
</dbReference>
<dbReference type="GO" id="GO:0051082">
    <property type="term" value="F:unfolded protein binding"/>
    <property type="evidence" value="ECO:0007669"/>
    <property type="project" value="InterPro"/>
</dbReference>
<dbReference type="GO" id="GO:0016226">
    <property type="term" value="P:iron-sulfur cluster assembly"/>
    <property type="evidence" value="ECO:0007669"/>
    <property type="project" value="InterPro"/>
</dbReference>
<dbReference type="CDD" id="cd10236">
    <property type="entry name" value="ASKHA_NBD_HSP70_HscA"/>
    <property type="match status" value="1"/>
</dbReference>
<dbReference type="FunFam" id="3.30.420.40:FF:000046">
    <property type="entry name" value="Chaperone protein HscA"/>
    <property type="match status" value="1"/>
</dbReference>
<dbReference type="FunFam" id="2.60.34.10:FF:000005">
    <property type="entry name" value="Chaperone protein HscA homolog"/>
    <property type="match status" value="1"/>
</dbReference>
<dbReference type="Gene3D" id="1.20.1270.10">
    <property type="match status" value="1"/>
</dbReference>
<dbReference type="Gene3D" id="3.30.420.40">
    <property type="match status" value="2"/>
</dbReference>
<dbReference type="Gene3D" id="3.90.640.10">
    <property type="entry name" value="Actin, Chain A, domain 4"/>
    <property type="match status" value="1"/>
</dbReference>
<dbReference type="Gene3D" id="2.60.34.10">
    <property type="entry name" value="Substrate Binding Domain Of DNAk, Chain A, domain 1"/>
    <property type="match status" value="1"/>
</dbReference>
<dbReference type="HAMAP" id="MF_00679">
    <property type="entry name" value="HscA"/>
    <property type="match status" value="1"/>
</dbReference>
<dbReference type="InterPro" id="IPR043129">
    <property type="entry name" value="ATPase_NBD"/>
</dbReference>
<dbReference type="InterPro" id="IPR018181">
    <property type="entry name" value="Heat_shock_70_CS"/>
</dbReference>
<dbReference type="InterPro" id="IPR042039">
    <property type="entry name" value="HscA_NBD"/>
</dbReference>
<dbReference type="InterPro" id="IPR029048">
    <property type="entry name" value="HSP70_C_sf"/>
</dbReference>
<dbReference type="InterPro" id="IPR029047">
    <property type="entry name" value="HSP70_peptide-bd_sf"/>
</dbReference>
<dbReference type="InterPro" id="IPR013126">
    <property type="entry name" value="Hsp_70_fam"/>
</dbReference>
<dbReference type="InterPro" id="IPR010236">
    <property type="entry name" value="ISC_FeS_clus_asmbl_HscA"/>
</dbReference>
<dbReference type="NCBIfam" id="TIGR01991">
    <property type="entry name" value="HscA"/>
    <property type="match status" value="1"/>
</dbReference>
<dbReference type="NCBIfam" id="NF003520">
    <property type="entry name" value="PRK05183.1"/>
    <property type="match status" value="1"/>
</dbReference>
<dbReference type="PANTHER" id="PTHR19375">
    <property type="entry name" value="HEAT SHOCK PROTEIN 70KDA"/>
    <property type="match status" value="1"/>
</dbReference>
<dbReference type="Pfam" id="PF00012">
    <property type="entry name" value="HSP70"/>
    <property type="match status" value="1"/>
</dbReference>
<dbReference type="PRINTS" id="PR00301">
    <property type="entry name" value="HEATSHOCK70"/>
</dbReference>
<dbReference type="SUPFAM" id="SSF53067">
    <property type="entry name" value="Actin-like ATPase domain"/>
    <property type="match status" value="2"/>
</dbReference>
<dbReference type="SUPFAM" id="SSF100934">
    <property type="entry name" value="Heat shock protein 70kD (HSP70), C-terminal subdomain"/>
    <property type="match status" value="1"/>
</dbReference>
<dbReference type="SUPFAM" id="SSF100920">
    <property type="entry name" value="Heat shock protein 70kD (HSP70), peptide-binding domain"/>
    <property type="match status" value="1"/>
</dbReference>
<dbReference type="PROSITE" id="PS00297">
    <property type="entry name" value="HSP70_1"/>
    <property type="match status" value="1"/>
</dbReference>
<dbReference type="PROSITE" id="PS00329">
    <property type="entry name" value="HSP70_2"/>
    <property type="match status" value="1"/>
</dbReference>
<dbReference type="PROSITE" id="PS01036">
    <property type="entry name" value="HSP70_3"/>
    <property type="match status" value="1"/>
</dbReference>
<name>HSCA_TOLAT</name>
<sequence>MALLHIAEPGLSAAPHQQKWAVGIDLGTTNSLVAVVRSGVAETLKDEQGRDILPSVVRYLPDGLQIGAEAKHAAAEDPLNTIQSVKRFMGKALSDITQTNLPYQFTGADKGLVHINTCQGEVNPVQVSAEILKALQLRATEALGAELDGVVITVPAYFNDAQRQATKDAARLAGMHVLRLLNEPTAAAVAYGLDSGQEGVIAVYDLGGGTFDISILRLHQGVFEVMATGGDSALGGDDFDHLLADWIAEQADLIAPFTPRVQRQLLDLACDVKQQLSSQDTVAVSFAQWSGSIDRTQFEDLITPLVKKTLMSCRRAIKDAGVEADEVLEVVMVGGSTRVPLVRQLVGDFFGRTPLTSIDPDKVVAVGAAIQADILVGNKPESEMLLLDVIPLSLGLETMGGLVEKIIPRNTTIPAARAQDFTTFKDGQTAMMIHVLQGERELVSDCRSLARFVLKGIPPLAAGAAHIRVTFQVDADGLLSVSAMEKSTGVQAAIEVKPSYGLQEEDMLRMLRESVEFAEKDIKARMLVEQKVEADRVLESLRQALSKDGDALLSPEERSVINDAIQNLVNIQQGDDTDAIKAAITALDEATSEFAARRMDSSIRQALQGHKIDEVN</sequence>
<accession>C4L7J8</accession>
<gene>
    <name evidence="1" type="primary">hscA</name>
    <name type="ordered locus">Tola_2015</name>
</gene>